<reference key="1">
    <citation type="journal article" date="1996" name="J. Bacteriol.">
        <title>Malate dehydrogenase from the mesophile Chlorobium vibrioforme and from the mild thermophile Chlorobium tepidum: molecular cloning, construction of a hybrid, and expression in Escherichia coli.</title>
        <authorList>
            <person name="Naterstad K."/>
            <person name="Lauvrak V."/>
            <person name="Sirevag R."/>
        </authorList>
    </citation>
    <scope>NUCLEOTIDE SEQUENCE [GENOMIC DNA]</scope>
</reference>
<reference key="2">
    <citation type="journal article" date="2002" name="Proc. Natl. Acad. Sci. U.S.A.">
        <title>The complete genome sequence of Chlorobium tepidum TLS, a photosynthetic, anaerobic, green-sulfur bacterium.</title>
        <authorList>
            <person name="Eisen J.A."/>
            <person name="Nelson K.E."/>
            <person name="Paulsen I.T."/>
            <person name="Heidelberg J.F."/>
            <person name="Wu M."/>
            <person name="Dodson R.J."/>
            <person name="DeBoy R.T."/>
            <person name="Gwinn M.L."/>
            <person name="Nelson W.C."/>
            <person name="Haft D.H."/>
            <person name="Hickey E.K."/>
            <person name="Peterson J.D."/>
            <person name="Durkin A.S."/>
            <person name="Kolonay J.F."/>
            <person name="Yang F."/>
            <person name="Holt I.E."/>
            <person name="Umayam L.A."/>
            <person name="Mason T.M."/>
            <person name="Brenner M."/>
            <person name="Shea T.P."/>
            <person name="Parksey D.S."/>
            <person name="Nierman W.C."/>
            <person name="Feldblyum T.V."/>
            <person name="Hansen C.L."/>
            <person name="Craven M.B."/>
            <person name="Radune D."/>
            <person name="Vamathevan J.J."/>
            <person name="Khouri H.M."/>
            <person name="White O."/>
            <person name="Gruber T.M."/>
            <person name="Ketchum K.A."/>
            <person name="Venter J.C."/>
            <person name="Tettelin H."/>
            <person name="Bryant D.A."/>
            <person name="Fraser C.M."/>
        </authorList>
    </citation>
    <scope>NUCLEOTIDE SEQUENCE [LARGE SCALE GENOMIC DNA]</scope>
    <source>
        <strain>ATCC 49652 / DSM 12025 / NBRC 103806 / TLS</strain>
    </source>
</reference>
<reference key="3">
    <citation type="journal article" date="1992" name="J. Bacteriol.">
        <title>Malate dehydrogenase from Chlorobium vibrioforme, Chlorobium tepidum, and Heliobacterium gestii: purification, characterization, and investigation of dinucleotide binding by dehydrogenases by use of empirical methods of protein sequence analysis.</title>
        <authorList>
            <person name="Charnock C.B."/>
            <person name="Refseth U.H."/>
            <person name="Strevaag R."/>
        </authorList>
    </citation>
    <scope>PROTEIN SEQUENCE OF 1-34</scope>
</reference>
<reference key="4">
    <citation type="journal article" date="2002" name="J. Mol. Biol.">
        <title>Structural basis for thermophilic protein stability: structures of thermophilic and mesophilic malate dehydrogenases.</title>
        <authorList>
            <person name="Dalhus B."/>
            <person name="Saarinen M."/>
            <person name="Sauer U.H."/>
            <person name="Eklund P."/>
            <person name="Johansson K."/>
            <person name="Karlsson A."/>
            <person name="Ramaswamy S."/>
            <person name="Bjoerk A."/>
            <person name="Synstad B."/>
            <person name="Naterstad K."/>
            <person name="Sirevaag R."/>
            <person name="Eklund H."/>
        </authorList>
    </citation>
    <scope>X-RAY CRYSTALLOGRAPHY (2.5 ANGSTROMS) IN COMPLEX WITH NAD</scope>
    <scope>SUBUNIT</scope>
</reference>
<dbReference type="EC" id="1.1.1.37" evidence="1"/>
<dbReference type="EMBL" id="X80838">
    <property type="protein sequence ID" value="CAA56810.1"/>
    <property type="molecule type" value="Genomic_DNA"/>
</dbReference>
<dbReference type="EMBL" id="AE006470">
    <property type="protein sequence ID" value="AAM72734.1"/>
    <property type="molecule type" value="Genomic_DNA"/>
</dbReference>
<dbReference type="RefSeq" id="NP_662392.1">
    <property type="nucleotide sequence ID" value="NC_002932.3"/>
</dbReference>
<dbReference type="RefSeq" id="WP_010933173.1">
    <property type="nucleotide sequence ID" value="NC_002932.3"/>
</dbReference>
<dbReference type="PDB" id="1GUZ">
    <property type="method" value="X-ray"/>
    <property type="resolution" value="2.00 A"/>
    <property type="chains" value="A/B/C/D=1-71"/>
</dbReference>
<dbReference type="PDB" id="1GV0">
    <property type="method" value="X-ray"/>
    <property type="resolution" value="2.50 A"/>
    <property type="chains" value="A/B=1-310"/>
</dbReference>
<dbReference type="PDBsum" id="1GUZ"/>
<dbReference type="PDBsum" id="1GV0"/>
<dbReference type="SMR" id="P80039"/>
<dbReference type="STRING" id="194439.CT1507"/>
<dbReference type="EnsemblBacteria" id="AAM72734">
    <property type="protein sequence ID" value="AAM72734"/>
    <property type="gene ID" value="CT1507"/>
</dbReference>
<dbReference type="KEGG" id="cte:CT1507"/>
<dbReference type="PATRIC" id="fig|194439.7.peg.1367"/>
<dbReference type="eggNOG" id="COG0039">
    <property type="taxonomic scope" value="Bacteria"/>
</dbReference>
<dbReference type="HOGENOM" id="CLU_045401_2_1_10"/>
<dbReference type="OrthoDB" id="9802969at2"/>
<dbReference type="EvolutionaryTrace" id="P80039"/>
<dbReference type="Proteomes" id="UP000001007">
    <property type="component" value="Chromosome"/>
</dbReference>
<dbReference type="GO" id="GO:0004459">
    <property type="term" value="F:L-lactate dehydrogenase activity"/>
    <property type="evidence" value="ECO:0007669"/>
    <property type="project" value="TreeGrafter"/>
</dbReference>
<dbReference type="GO" id="GO:0030060">
    <property type="term" value="F:L-malate dehydrogenase (NAD+) activity"/>
    <property type="evidence" value="ECO:0007669"/>
    <property type="project" value="UniProtKB-UniRule"/>
</dbReference>
<dbReference type="GO" id="GO:0006089">
    <property type="term" value="P:lactate metabolic process"/>
    <property type="evidence" value="ECO:0007669"/>
    <property type="project" value="TreeGrafter"/>
</dbReference>
<dbReference type="GO" id="GO:0006099">
    <property type="term" value="P:tricarboxylic acid cycle"/>
    <property type="evidence" value="ECO:0007669"/>
    <property type="project" value="UniProtKB-UniRule"/>
</dbReference>
<dbReference type="CDD" id="cd01339">
    <property type="entry name" value="LDH-like_MDH"/>
    <property type="match status" value="1"/>
</dbReference>
<dbReference type="FunFam" id="3.40.50.720:FF:000018">
    <property type="entry name" value="Malate dehydrogenase"/>
    <property type="match status" value="1"/>
</dbReference>
<dbReference type="FunFam" id="3.90.110.10:FF:000004">
    <property type="entry name" value="Malate dehydrogenase"/>
    <property type="match status" value="1"/>
</dbReference>
<dbReference type="Gene3D" id="3.90.110.10">
    <property type="entry name" value="Lactate dehydrogenase/glycoside hydrolase, family 4, C-terminal"/>
    <property type="match status" value="1"/>
</dbReference>
<dbReference type="Gene3D" id="3.40.50.720">
    <property type="entry name" value="NAD(P)-binding Rossmann-like Domain"/>
    <property type="match status" value="1"/>
</dbReference>
<dbReference type="HAMAP" id="MF_00487">
    <property type="entry name" value="Malate_dehydrog_3"/>
    <property type="match status" value="1"/>
</dbReference>
<dbReference type="InterPro" id="IPR001557">
    <property type="entry name" value="L-lactate/malate_DH"/>
</dbReference>
<dbReference type="InterPro" id="IPR022383">
    <property type="entry name" value="Lactate/malate_DH_C"/>
</dbReference>
<dbReference type="InterPro" id="IPR001236">
    <property type="entry name" value="Lactate/malate_DH_N"/>
</dbReference>
<dbReference type="InterPro" id="IPR015955">
    <property type="entry name" value="Lactate_DH/Glyco_Ohase_4_C"/>
</dbReference>
<dbReference type="InterPro" id="IPR011275">
    <property type="entry name" value="Malate_DH_type3"/>
</dbReference>
<dbReference type="InterPro" id="IPR036291">
    <property type="entry name" value="NAD(P)-bd_dom_sf"/>
</dbReference>
<dbReference type="NCBIfam" id="TIGR01763">
    <property type="entry name" value="MalateDH_bact"/>
    <property type="match status" value="1"/>
</dbReference>
<dbReference type="NCBIfam" id="NF004863">
    <property type="entry name" value="PRK06223.1"/>
    <property type="match status" value="1"/>
</dbReference>
<dbReference type="PANTHER" id="PTHR43128">
    <property type="entry name" value="L-2-HYDROXYCARBOXYLATE DEHYDROGENASE (NAD(P)(+))"/>
    <property type="match status" value="1"/>
</dbReference>
<dbReference type="PANTHER" id="PTHR43128:SF16">
    <property type="entry name" value="L-LACTATE DEHYDROGENASE"/>
    <property type="match status" value="1"/>
</dbReference>
<dbReference type="Pfam" id="PF02866">
    <property type="entry name" value="Ldh_1_C"/>
    <property type="match status" value="1"/>
</dbReference>
<dbReference type="Pfam" id="PF00056">
    <property type="entry name" value="Ldh_1_N"/>
    <property type="match status" value="1"/>
</dbReference>
<dbReference type="PIRSF" id="PIRSF000102">
    <property type="entry name" value="Lac_mal_DH"/>
    <property type="match status" value="1"/>
</dbReference>
<dbReference type="PRINTS" id="PR00086">
    <property type="entry name" value="LLDHDRGNASE"/>
</dbReference>
<dbReference type="SUPFAM" id="SSF56327">
    <property type="entry name" value="LDH C-terminal domain-like"/>
    <property type="match status" value="1"/>
</dbReference>
<dbReference type="SUPFAM" id="SSF51735">
    <property type="entry name" value="NAD(P)-binding Rossmann-fold domains"/>
    <property type="match status" value="1"/>
</dbReference>
<keyword id="KW-0002">3D-structure</keyword>
<keyword id="KW-0903">Direct protein sequencing</keyword>
<keyword id="KW-0520">NAD</keyword>
<keyword id="KW-0560">Oxidoreductase</keyword>
<keyword id="KW-1185">Reference proteome</keyword>
<keyword id="KW-0816">Tricarboxylic acid cycle</keyword>
<feature type="chain" id="PRO_0000113448" description="Malate dehydrogenase">
    <location>
        <begin position="1"/>
        <end position="310"/>
    </location>
</feature>
<feature type="active site" description="Proton acceptor" evidence="1">
    <location>
        <position position="174"/>
    </location>
</feature>
<feature type="binding site" evidence="1 2">
    <location>
        <begin position="7"/>
        <end position="12"/>
    </location>
    <ligand>
        <name>NAD(+)</name>
        <dbReference type="ChEBI" id="CHEBI:57540"/>
    </ligand>
</feature>
<feature type="binding site" evidence="1 2">
    <location>
        <position position="32"/>
    </location>
    <ligand>
        <name>NAD(+)</name>
        <dbReference type="ChEBI" id="CHEBI:57540"/>
    </ligand>
</feature>
<feature type="binding site" evidence="1">
    <location>
        <position position="81"/>
    </location>
    <ligand>
        <name>substrate</name>
    </ligand>
</feature>
<feature type="binding site" evidence="1">
    <location>
        <position position="87"/>
    </location>
    <ligand>
        <name>substrate</name>
    </ligand>
</feature>
<feature type="binding site" evidence="1 2">
    <location>
        <position position="94"/>
    </location>
    <ligand>
        <name>NAD(+)</name>
        <dbReference type="ChEBI" id="CHEBI:57540"/>
    </ligand>
</feature>
<feature type="binding site" evidence="1 2">
    <location>
        <begin position="117"/>
        <end position="119"/>
    </location>
    <ligand>
        <name>NAD(+)</name>
        <dbReference type="ChEBI" id="CHEBI:57540"/>
    </ligand>
</feature>
<feature type="binding site" evidence="1">
    <location>
        <position position="119"/>
    </location>
    <ligand>
        <name>substrate</name>
    </ligand>
</feature>
<feature type="binding site" evidence="1">
    <location>
        <position position="150"/>
    </location>
    <ligand>
        <name>substrate</name>
    </ligand>
</feature>
<feature type="sequence conflict" description="In Ref. 1; CAA56810." evidence="3" ref="1">
    <original>A</original>
    <variation>S</variation>
    <location>
        <position position="227"/>
    </location>
</feature>
<feature type="strand" evidence="4">
    <location>
        <begin position="2"/>
        <end position="6"/>
    </location>
</feature>
<feature type="helix" evidence="4">
    <location>
        <begin position="10"/>
        <end position="21"/>
    </location>
</feature>
<feature type="strand" evidence="4">
    <location>
        <begin position="26"/>
        <end position="31"/>
    </location>
</feature>
<feature type="strand" evidence="4">
    <location>
        <begin position="33"/>
        <end position="36"/>
    </location>
</feature>
<feature type="helix" evidence="4">
    <location>
        <begin position="37"/>
        <end position="46"/>
    </location>
</feature>
<feature type="helix" evidence="4">
    <location>
        <begin position="49"/>
        <end position="52"/>
    </location>
</feature>
<feature type="strand" evidence="4">
    <location>
        <begin position="57"/>
        <end position="62"/>
    </location>
</feature>
<feature type="helix" evidence="4">
    <location>
        <begin position="64"/>
        <end position="67"/>
    </location>
</feature>
<feature type="strand" evidence="4">
    <location>
        <begin position="71"/>
        <end position="73"/>
    </location>
</feature>
<feature type="helix" evidence="5">
    <location>
        <begin position="92"/>
        <end position="105"/>
    </location>
</feature>
<feature type="turn" evidence="5">
    <location>
        <begin position="106"/>
        <end position="108"/>
    </location>
</feature>
<feature type="strand" evidence="5">
    <location>
        <begin position="113"/>
        <end position="116"/>
    </location>
</feature>
<feature type="strand" evidence="5">
    <location>
        <begin position="118"/>
        <end position="120"/>
    </location>
</feature>
<feature type="helix" evidence="5">
    <location>
        <begin position="121"/>
        <end position="132"/>
    </location>
</feature>
<feature type="helix" evidence="5">
    <location>
        <begin position="136"/>
        <end position="138"/>
    </location>
</feature>
<feature type="strand" evidence="5">
    <location>
        <begin position="139"/>
        <end position="142"/>
    </location>
</feature>
<feature type="helix" evidence="5">
    <location>
        <begin position="144"/>
        <end position="159"/>
    </location>
</feature>
<feature type="helix" evidence="5">
    <location>
        <begin position="163"/>
        <end position="165"/>
    </location>
</feature>
<feature type="strand" evidence="5">
    <location>
        <begin position="166"/>
        <end position="172"/>
    </location>
</feature>
<feature type="helix" evidence="5">
    <location>
        <begin position="175"/>
        <end position="177"/>
    </location>
</feature>
<feature type="strand" evidence="5">
    <location>
        <begin position="178"/>
        <end position="187"/>
    </location>
</feature>
<feature type="helix" evidence="5">
    <location>
        <begin position="192"/>
        <end position="194"/>
    </location>
</feature>
<feature type="helix" evidence="5">
    <location>
        <begin position="198"/>
        <end position="209"/>
    </location>
</feature>
<feature type="helix" evidence="5">
    <location>
        <begin position="211"/>
        <end position="219"/>
    </location>
</feature>
<feature type="strand" evidence="5">
    <location>
        <begin position="220"/>
        <end position="222"/>
    </location>
</feature>
<feature type="helix" evidence="5">
    <location>
        <begin position="226"/>
        <end position="240"/>
    </location>
</feature>
<feature type="strand" evidence="5">
    <location>
        <begin position="245"/>
        <end position="255"/>
    </location>
</feature>
<feature type="helix" evidence="5">
    <location>
        <begin position="256"/>
        <end position="258"/>
    </location>
</feature>
<feature type="strand" evidence="5">
    <location>
        <begin position="260"/>
        <end position="271"/>
    </location>
</feature>
<feature type="strand" evidence="5">
    <location>
        <begin position="274"/>
        <end position="278"/>
    </location>
</feature>
<feature type="helix" evidence="5">
    <location>
        <begin position="285"/>
        <end position="304"/>
    </location>
</feature>
<gene>
    <name evidence="1" type="primary">mdh</name>
    <name type="ordered locus">CT1507</name>
</gene>
<protein>
    <recommendedName>
        <fullName evidence="1">Malate dehydrogenase</fullName>
        <ecNumber evidence="1">1.1.1.37</ecNumber>
    </recommendedName>
</protein>
<organism>
    <name type="scientific">Chlorobaculum tepidum (strain ATCC 49652 / DSM 12025 / NBRC 103806 / TLS)</name>
    <name type="common">Chlorobium tepidum</name>
    <dbReference type="NCBI Taxonomy" id="194439"/>
    <lineage>
        <taxon>Bacteria</taxon>
        <taxon>Pseudomonadati</taxon>
        <taxon>Chlorobiota</taxon>
        <taxon>Chlorobiia</taxon>
        <taxon>Chlorobiales</taxon>
        <taxon>Chlorobiaceae</taxon>
        <taxon>Chlorobaculum</taxon>
    </lineage>
</organism>
<name>MDH_CHLTE</name>
<comment type="function">
    <text evidence="1">Catalyzes the reversible oxidation of malate to oxaloacetate.</text>
</comment>
<comment type="catalytic activity">
    <reaction evidence="1">
        <text>(S)-malate + NAD(+) = oxaloacetate + NADH + H(+)</text>
        <dbReference type="Rhea" id="RHEA:21432"/>
        <dbReference type="ChEBI" id="CHEBI:15378"/>
        <dbReference type="ChEBI" id="CHEBI:15589"/>
        <dbReference type="ChEBI" id="CHEBI:16452"/>
        <dbReference type="ChEBI" id="CHEBI:57540"/>
        <dbReference type="ChEBI" id="CHEBI:57945"/>
        <dbReference type="EC" id="1.1.1.37"/>
    </reaction>
</comment>
<comment type="subunit">
    <text evidence="2">Homotetramer; arranged as a dimer of dimers.</text>
</comment>
<comment type="similarity">
    <text evidence="1">Belongs to the LDH/MDH superfamily. MDH type 3 family.</text>
</comment>
<evidence type="ECO:0000255" key="1">
    <source>
        <dbReference type="HAMAP-Rule" id="MF_00487"/>
    </source>
</evidence>
<evidence type="ECO:0000269" key="2">
    <source>
    </source>
</evidence>
<evidence type="ECO:0000305" key="3"/>
<evidence type="ECO:0007829" key="4">
    <source>
        <dbReference type="PDB" id="1GUZ"/>
    </source>
</evidence>
<evidence type="ECO:0007829" key="5">
    <source>
        <dbReference type="PDB" id="1GV0"/>
    </source>
</evidence>
<proteinExistence type="evidence at protein level"/>
<accession>P80039</accession>
<accession>P94677</accession>
<sequence length="310" mass="33092">MKITVIGAGNVGATTAFRLAEKQLARELVLLDVVEGIPQGKALDMYESGPVGLFDTKVTGSNDYADTANSDIVVITAGLPRKPGMTREDLLSMNAGIVREVTGRIMEHSKNPIIVVVSNPLDIMTHVAWQKSGLPKERVIGMAGVLDSARFRSFIAMELGVSMQDVTACVLGGHGDAMVPVVKYTTVAGIPVADLISAERIAELVERTRTGGAEIVNHLKQGSAFYAPATSVVEMVESIVLDRKRVLTCAVSLDGQYGIDGTFVGVPVKLGKNGVEHIYEIKLDQSDLDLLQKSAKIVDENCKMLDASQG</sequence>